<reference key="1">
    <citation type="journal article" date="1996" name="Plant Mol. Biol.">
        <title>cDNA cloning and gene expression of ascorbate oxidase in tobacco.</title>
        <authorList>
            <person name="Kato N."/>
            <person name="Esaka M."/>
        </authorList>
    </citation>
    <scope>NUCLEOTIDE SEQUENCE [MRNA]</scope>
</reference>
<comment type="function">
    <text>May be involved in a redox system involving ascorbic acid.</text>
</comment>
<comment type="catalytic activity">
    <reaction>
        <text>4 L-ascorbate + O2 = 4 monodehydro-L-ascorbate radical + 2 H2O</text>
        <dbReference type="Rhea" id="RHEA:30243"/>
        <dbReference type="ChEBI" id="CHEBI:15377"/>
        <dbReference type="ChEBI" id="CHEBI:15379"/>
        <dbReference type="ChEBI" id="CHEBI:38290"/>
        <dbReference type="ChEBI" id="CHEBI:59513"/>
        <dbReference type="EC" id="1.10.3.3"/>
    </reaction>
</comment>
<comment type="cofactor">
    <cofactor evidence="1">
        <name>Cu cation</name>
        <dbReference type="ChEBI" id="CHEBI:23378"/>
    </cofactor>
    <text evidence="1">Binds 4 Cu cations per monomer.</text>
</comment>
<comment type="subunit">
    <text evidence="1">Dimer.</text>
</comment>
<comment type="subcellular location">
    <subcellularLocation>
        <location evidence="3">Secreted</location>
    </subcellularLocation>
</comment>
<comment type="tissue specificity">
    <text>Highly expressed in young and growing tissues.</text>
</comment>
<comment type="similarity">
    <text evidence="3">Belongs to the multicopper oxidase family.</text>
</comment>
<protein>
    <recommendedName>
        <fullName>L-ascorbate oxidase</fullName>
        <shortName>ASO</shortName>
        <shortName>Ascorbase</shortName>
        <ecNumber>1.10.3.3</ecNumber>
    </recommendedName>
</protein>
<dbReference type="EC" id="1.10.3.3"/>
<dbReference type="EMBL" id="D43624">
    <property type="protein sequence ID" value="BAA07734.1"/>
    <property type="molecule type" value="mRNA"/>
</dbReference>
<dbReference type="PIR" id="S66353">
    <property type="entry name" value="S66353"/>
</dbReference>
<dbReference type="RefSeq" id="NP_001313101.1">
    <property type="nucleotide sequence ID" value="NM_001326172.1"/>
</dbReference>
<dbReference type="SMR" id="Q40588"/>
<dbReference type="STRING" id="4097.Q40588"/>
<dbReference type="GlyCosmos" id="Q40588">
    <property type="glycosylation" value="5 sites, No reported glycans"/>
</dbReference>
<dbReference type="PaxDb" id="4097-Q40588"/>
<dbReference type="GeneID" id="107826841"/>
<dbReference type="KEGG" id="nta:107826841"/>
<dbReference type="OrthoDB" id="2121828at2759"/>
<dbReference type="BRENDA" id="1.10.3.3">
    <property type="organism ID" value="3645"/>
</dbReference>
<dbReference type="Proteomes" id="UP000084051">
    <property type="component" value="Unplaced"/>
</dbReference>
<dbReference type="GO" id="GO:0005576">
    <property type="term" value="C:extracellular region"/>
    <property type="evidence" value="ECO:0007669"/>
    <property type="project" value="UniProtKB-SubCell"/>
</dbReference>
<dbReference type="GO" id="GO:0005507">
    <property type="term" value="F:copper ion binding"/>
    <property type="evidence" value="ECO:0007669"/>
    <property type="project" value="InterPro"/>
</dbReference>
<dbReference type="GO" id="GO:0008447">
    <property type="term" value="F:L-ascorbate oxidase activity"/>
    <property type="evidence" value="ECO:0007669"/>
    <property type="project" value="UniProtKB-EC"/>
</dbReference>
<dbReference type="GO" id="GO:0016491">
    <property type="term" value="F:oxidoreductase activity"/>
    <property type="evidence" value="ECO:0000318"/>
    <property type="project" value="GO_Central"/>
</dbReference>
<dbReference type="CDD" id="cd13845">
    <property type="entry name" value="CuRO_1_AAO"/>
    <property type="match status" value="1"/>
</dbReference>
<dbReference type="CDD" id="cd13893">
    <property type="entry name" value="CuRO_3_AAO"/>
    <property type="match status" value="1"/>
</dbReference>
<dbReference type="FunFam" id="2.60.40.420:FF:000058">
    <property type="entry name" value="L-ascorbate oxidase"/>
    <property type="match status" value="1"/>
</dbReference>
<dbReference type="FunFam" id="2.60.40.420:FF:000059">
    <property type="entry name" value="L-ascorbate oxidase"/>
    <property type="match status" value="1"/>
</dbReference>
<dbReference type="FunFam" id="2.60.40.420:FF:000060">
    <property type="entry name" value="L-ascorbate oxidase"/>
    <property type="match status" value="1"/>
</dbReference>
<dbReference type="Gene3D" id="2.60.40.420">
    <property type="entry name" value="Cupredoxins - blue copper proteins"/>
    <property type="match status" value="3"/>
</dbReference>
<dbReference type="InterPro" id="IPR011707">
    <property type="entry name" value="Cu-oxidase-like_N"/>
</dbReference>
<dbReference type="InterPro" id="IPR001117">
    <property type="entry name" value="Cu-oxidase_2nd"/>
</dbReference>
<dbReference type="InterPro" id="IPR011706">
    <property type="entry name" value="Cu-oxidase_C"/>
</dbReference>
<dbReference type="InterPro" id="IPR045087">
    <property type="entry name" value="Cu-oxidase_fam"/>
</dbReference>
<dbReference type="InterPro" id="IPR033138">
    <property type="entry name" value="Cu_oxidase_CS"/>
</dbReference>
<dbReference type="InterPro" id="IPR002355">
    <property type="entry name" value="Cu_oxidase_Cu_BS"/>
</dbReference>
<dbReference type="InterPro" id="IPR008972">
    <property type="entry name" value="Cupredoxin"/>
</dbReference>
<dbReference type="InterPro" id="IPR034259">
    <property type="entry name" value="CuRO_1_AAO"/>
</dbReference>
<dbReference type="InterPro" id="IPR034267">
    <property type="entry name" value="CuRO_3_AAO"/>
</dbReference>
<dbReference type="InterPro" id="IPR017760">
    <property type="entry name" value="L-ascorbate_oxidase_pln"/>
</dbReference>
<dbReference type="NCBIfam" id="TIGR03388">
    <property type="entry name" value="ascorbase"/>
    <property type="match status" value="1"/>
</dbReference>
<dbReference type="PANTHER" id="PTHR11709:SF394">
    <property type="entry name" value="FI03373P-RELATED"/>
    <property type="match status" value="1"/>
</dbReference>
<dbReference type="PANTHER" id="PTHR11709">
    <property type="entry name" value="MULTI-COPPER OXIDASE"/>
    <property type="match status" value="1"/>
</dbReference>
<dbReference type="Pfam" id="PF00394">
    <property type="entry name" value="Cu-oxidase"/>
    <property type="match status" value="1"/>
</dbReference>
<dbReference type="Pfam" id="PF07731">
    <property type="entry name" value="Cu-oxidase_2"/>
    <property type="match status" value="1"/>
</dbReference>
<dbReference type="Pfam" id="PF07732">
    <property type="entry name" value="Cu-oxidase_3"/>
    <property type="match status" value="1"/>
</dbReference>
<dbReference type="SUPFAM" id="SSF49503">
    <property type="entry name" value="Cupredoxins"/>
    <property type="match status" value="3"/>
</dbReference>
<dbReference type="PROSITE" id="PS00079">
    <property type="entry name" value="MULTICOPPER_OXIDASE1"/>
    <property type="match status" value="1"/>
</dbReference>
<dbReference type="PROSITE" id="PS00080">
    <property type="entry name" value="MULTICOPPER_OXIDASE2"/>
    <property type="match status" value="1"/>
</dbReference>
<accession>Q40588</accession>
<organism>
    <name type="scientific">Nicotiana tabacum</name>
    <name type="common">Common tobacco</name>
    <dbReference type="NCBI Taxonomy" id="4097"/>
    <lineage>
        <taxon>Eukaryota</taxon>
        <taxon>Viridiplantae</taxon>
        <taxon>Streptophyta</taxon>
        <taxon>Embryophyta</taxon>
        <taxon>Tracheophyta</taxon>
        <taxon>Spermatophyta</taxon>
        <taxon>Magnoliopsida</taxon>
        <taxon>eudicotyledons</taxon>
        <taxon>Gunneridae</taxon>
        <taxon>Pentapetalae</taxon>
        <taxon>asterids</taxon>
        <taxon>lamiids</taxon>
        <taxon>Solanales</taxon>
        <taxon>Solanaceae</taxon>
        <taxon>Nicotianoideae</taxon>
        <taxon>Nicotianeae</taxon>
        <taxon>Nicotiana</taxon>
    </lineage>
</organism>
<evidence type="ECO:0000250" key="1"/>
<evidence type="ECO:0000255" key="2"/>
<evidence type="ECO:0000305" key="3"/>
<feature type="signal peptide" evidence="2">
    <location>
        <begin position="1"/>
        <end position="28"/>
    </location>
</feature>
<feature type="chain" id="PRO_0000002908" description="L-ascorbate oxidase">
    <location>
        <begin position="29"/>
        <end position="578"/>
    </location>
</feature>
<feature type="domain" description="Plastocyanin-like 1">
    <location>
        <begin position="30"/>
        <end position="149"/>
    </location>
</feature>
<feature type="domain" description="Plastocyanin-like 2">
    <location>
        <begin position="161"/>
        <end position="328"/>
    </location>
</feature>
<feature type="domain" description="Plastocyanin-like 3">
    <location>
        <begin position="372"/>
        <end position="550"/>
    </location>
</feature>
<feature type="binding site" description="type 2 copper site" evidence="1">
    <location>
        <position position="87"/>
    </location>
    <ligand>
        <name>Cu cation</name>
        <dbReference type="ChEBI" id="CHEBI:23378"/>
        <label>1</label>
    </ligand>
</feature>
<feature type="binding site" description="type 3 copper site" evidence="1">
    <location>
        <position position="89"/>
    </location>
    <ligand>
        <name>Cu cation</name>
        <dbReference type="ChEBI" id="CHEBI:23378"/>
        <label>2</label>
    </ligand>
</feature>
<feature type="binding site" description="type 3 copper site" evidence="1">
    <location>
        <position position="131"/>
    </location>
    <ligand>
        <name>Cu cation</name>
        <dbReference type="ChEBI" id="CHEBI:23378"/>
        <label>2</label>
    </ligand>
</feature>
<feature type="binding site" description="type 3 copper site" evidence="1">
    <location>
        <position position="133"/>
    </location>
    <ligand>
        <name>Cu cation</name>
        <dbReference type="ChEBI" id="CHEBI:23378"/>
        <label>3</label>
    </ligand>
</feature>
<feature type="binding site" description="type 1 copper site" evidence="1">
    <location>
        <position position="472"/>
    </location>
    <ligand>
        <name>Cu cation</name>
        <dbReference type="ChEBI" id="CHEBI:23378"/>
        <label>4</label>
    </ligand>
</feature>
<feature type="binding site" description="type 2 copper site" evidence="1">
    <location>
        <position position="475"/>
    </location>
    <ligand>
        <name>Cu cation</name>
        <dbReference type="ChEBI" id="CHEBI:23378"/>
        <label>1</label>
    </ligand>
</feature>
<feature type="binding site" description="type 3 copper site" evidence="1">
    <location>
        <position position="477"/>
    </location>
    <ligand>
        <name>Cu cation</name>
        <dbReference type="ChEBI" id="CHEBI:23378"/>
        <label>3</label>
    </ligand>
</feature>
<feature type="binding site" description="type 3 copper site" evidence="1">
    <location>
        <position position="533"/>
    </location>
    <ligand>
        <name>Cu cation</name>
        <dbReference type="ChEBI" id="CHEBI:23378"/>
        <label>3</label>
    </ligand>
</feature>
<feature type="binding site" description="type 1 copper site" evidence="1">
    <location>
        <position position="534"/>
    </location>
    <ligand>
        <name>Cu cation</name>
        <dbReference type="ChEBI" id="CHEBI:23378"/>
        <label>4</label>
    </ligand>
</feature>
<feature type="binding site" description="type 3 copper site" evidence="1">
    <location>
        <position position="535"/>
    </location>
    <ligand>
        <name>Cu cation</name>
        <dbReference type="ChEBI" id="CHEBI:23378"/>
        <label>2</label>
    </ligand>
</feature>
<feature type="binding site" description="type 1 copper site" evidence="1">
    <location>
        <position position="539"/>
    </location>
    <ligand>
        <name>Cu cation</name>
        <dbReference type="ChEBI" id="CHEBI:23378"/>
        <label>4</label>
    </ligand>
</feature>
<feature type="binding site" description="type 1 copper site" evidence="1">
    <location>
        <position position="544"/>
    </location>
    <ligand>
        <name>Cu cation</name>
        <dbReference type="ChEBI" id="CHEBI:23378"/>
        <label>4</label>
    </ligand>
</feature>
<feature type="glycosylation site" description="N-linked (GlcNAc...) asparagine" evidence="2">
    <location>
        <position position="206"/>
    </location>
</feature>
<feature type="glycosylation site" description="N-linked (GlcNAc...) asparagine" evidence="2">
    <location>
        <position position="349"/>
    </location>
</feature>
<feature type="glycosylation site" description="N-linked (GlcNAc...) asparagine" evidence="2">
    <location>
        <position position="394"/>
    </location>
</feature>
<feature type="glycosylation site" description="N-linked (GlcNAc...) asparagine" evidence="2">
    <location>
        <position position="438"/>
    </location>
</feature>
<feature type="glycosylation site" description="N-linked (GlcNAc...) asparagine" evidence="2">
    <location>
        <position position="451"/>
    </location>
</feature>
<feature type="disulfide bond" evidence="1">
    <location>
        <begin position="108"/>
        <end position="565"/>
    </location>
</feature>
<feature type="disulfide bond" evidence="1">
    <location>
        <begin position="207"/>
        <end position="221"/>
    </location>
</feature>
<proteinExistence type="evidence at transcript level"/>
<sequence length="578" mass="64865">MASLGFLFFFLLPLILLELSSSRSVMAAKTRHFKWDVEYIHWSPDGEESVVMGINGQFPGPTIRAKAGDTVAVHLTNKLHTEGVVIHWHGIRQIGTPWADGTAAISQCAINPGETFLYRFKVDKAGTYFYHGHYGMQRSAGLYGSLIVEVGEGEKEPFHYDGEFNLLLSDWWHKGSHEQEVDLSSNPLRWIGEPQTLLLNGRGQYNCSLAARFSKPPLPQCKLRGGEQYAPQILRVRPNKIYRLRVASTTALGSLSLAIGGHKMVVVEADGNYVQPFSVQDMDIYSGESYSVLFKTDQDPTKNYWISINVRGREPKTPQGLTLLNYLPNSASKFPTLPPPIAPLWNDYNHSKSFSNKIFALMGSPKPPPQNHRRIILLNTQNKIDGYTKWAINNVSLVLPTQLYLGSIRYGINAFDTKPPPDNFPKDYDVLKQAPNSNSTYGNGVYMLKFNTTIDIILQNANALAKDVSEIHPWHLHGHDFWVLGYGEGKFSEKDVKKFNLKNPPLRNTAVIFPFGWTALRFVTDNPGVWAFHCHIEPHLHMGMGVIFAEGVHLVKKIPKEALACGLTGKMLMSNKHN</sequence>
<gene>
    <name type="primary">AAO</name>
</gene>
<keyword id="KW-0186">Copper</keyword>
<keyword id="KW-1015">Disulfide bond</keyword>
<keyword id="KW-0325">Glycoprotein</keyword>
<keyword id="KW-0479">Metal-binding</keyword>
<keyword id="KW-0560">Oxidoreductase</keyword>
<keyword id="KW-1185">Reference proteome</keyword>
<keyword id="KW-0677">Repeat</keyword>
<keyword id="KW-0964">Secreted</keyword>
<keyword id="KW-0732">Signal</keyword>
<name>ASO_TOBAC</name>